<proteinExistence type="evidence at protein level"/>
<accession>A7Z063</accession>
<protein>
    <recommendedName>
        <fullName evidence="1">WASH complex subunit 1</fullName>
    </recommendedName>
    <alternativeName>
        <fullName>WAS protein family homolog 1</fullName>
    </alternativeName>
</protein>
<evidence type="ECO:0000250" key="1">
    <source>
        <dbReference type="UniProtKB" id="A8K0Z3"/>
    </source>
</evidence>
<evidence type="ECO:0000250" key="2">
    <source>
        <dbReference type="UniProtKB" id="C4AMC7"/>
    </source>
</evidence>
<evidence type="ECO:0000250" key="3">
    <source>
        <dbReference type="UniProtKB" id="Q8VDD8"/>
    </source>
</evidence>
<evidence type="ECO:0000255" key="4">
    <source>
        <dbReference type="PROSITE-ProRule" id="PRU00406"/>
    </source>
</evidence>
<evidence type="ECO:0000256" key="5">
    <source>
        <dbReference type="SAM" id="MobiDB-lite"/>
    </source>
</evidence>
<evidence type="ECO:0000305" key="6"/>
<reference key="1">
    <citation type="submission" date="2007-09" db="EMBL/GenBank/DDBJ databases">
        <authorList>
            <consortium name="NIH - Mammalian Gene Collection (MGC) project"/>
        </authorList>
    </citation>
    <scope>NUCLEOTIDE SEQUENCE [LARGE SCALE MRNA]</scope>
    <source>
        <strain>Hereford</strain>
        <tissue>Ascending colon</tissue>
    </source>
</reference>
<reference key="2">
    <citation type="journal article" date="2010" name="Proc. Natl. Acad. Sci. U.S.A.">
        <title>WASH and WAVE actin regulators of the Wiskott-Aldrich syndrome protein (WASP) family are controlled by analogous structurally related complexes.</title>
        <authorList>
            <person name="Jia D."/>
            <person name="Gomez T.S."/>
            <person name="Metlagel Z."/>
            <person name="Umetani J."/>
            <person name="Otwinowski Z."/>
            <person name="Rosen M.K."/>
            <person name="Billadeau D.D."/>
        </authorList>
    </citation>
    <scope>IDENTIFICATION IN THE WASH COMPLEX</scope>
</reference>
<gene>
    <name evidence="1" type="primary">WASHC1</name>
    <name type="synonym">WASH1</name>
</gene>
<sequence>MTPTGTQHSLAGQTYAVPLIQPDLRREEAIQQVADALQYLQKVSGDIFSRISQRVELSRSQLQAIGERVSLAQAKIEKIKGSKKAIKVFSSAKYPAPERLQEYGSIFMGAQDPGLQRRPRHRIQSKHRPLDERALQEKLKFFPVCVNTKPEPEDEAEEGLGGLPSNISSVSSLLLFNTTENLYKKYVFLDPLAGAVTKTHVMLGAETEEKLFDAPLSISRREQLERQVPENYFYVPDLGQVPDIDVPSYLPDLPGVADDLMYSADLGPGIAPSAPGAIPELPTFHTEVAQPFKPDLEDGVLTARPPPPPPPPPPPAPAVLMSVPPPPPPPQAPPGQPAKGDDSGGASPSAPVQGAPKEVVDPSSGRATLLESIRQAGGIGKAKLRSVKERKLEKKKQKEQEQVRATSQGGDLMSDLFNKLAMRRKGISGKGPGSGASEGPGGAFARMSDSIPPLPPPQQPPGEEDEDDWES</sequence>
<keyword id="KW-0009">Actin-binding</keyword>
<keyword id="KW-0963">Cytoplasm</keyword>
<keyword id="KW-0968">Cytoplasmic vesicle</keyword>
<keyword id="KW-0206">Cytoskeleton</keyword>
<keyword id="KW-0967">Endosome</keyword>
<keyword id="KW-0472">Membrane</keyword>
<keyword id="KW-0653">Protein transport</keyword>
<keyword id="KW-1185">Reference proteome</keyword>
<keyword id="KW-0813">Transport</keyword>
<dbReference type="EMBL" id="BC153261">
    <property type="protein sequence ID" value="AAI53262.1"/>
    <property type="molecule type" value="mRNA"/>
</dbReference>
<dbReference type="RefSeq" id="NP_001098876.1">
    <property type="nucleotide sequence ID" value="NM_001105406.1"/>
</dbReference>
<dbReference type="RefSeq" id="XP_059742513.1">
    <property type="nucleotide sequence ID" value="XM_059886530.1"/>
</dbReference>
<dbReference type="SMR" id="A7Z063"/>
<dbReference type="FunCoup" id="A7Z063">
    <property type="interactions" value="2385"/>
</dbReference>
<dbReference type="STRING" id="9913.ENSBTAP00000059564"/>
<dbReference type="PaxDb" id="9913-ENSBTAP00000015790"/>
<dbReference type="PeptideAtlas" id="A7Z063"/>
<dbReference type="Ensembl" id="ENSBTAT00000069933.2">
    <property type="protein sequence ID" value="ENSBTAP00000059564.1"/>
    <property type="gene ID" value="ENSBTAG00000011902.6"/>
</dbReference>
<dbReference type="GeneID" id="533602"/>
<dbReference type="KEGG" id="bta:533602"/>
<dbReference type="CTD" id="100287171"/>
<dbReference type="VEuPathDB" id="HostDB:ENSBTAG00000011902"/>
<dbReference type="eggNOG" id="ENOG502QSX3">
    <property type="taxonomic scope" value="Eukaryota"/>
</dbReference>
<dbReference type="GeneTree" id="ENSGT00390000016717"/>
<dbReference type="HOGENOM" id="CLU_029156_1_0_1"/>
<dbReference type="InParanoid" id="A7Z063"/>
<dbReference type="OMA" id="SMDSPYE"/>
<dbReference type="OrthoDB" id="307871at2759"/>
<dbReference type="TreeFam" id="TF318222"/>
<dbReference type="Proteomes" id="UP000009136">
    <property type="component" value="Chromosome 5"/>
</dbReference>
<dbReference type="Bgee" id="ENSBTAG00000011902">
    <property type="expression patterns" value="Expressed in retina and 105 other cell types or tissues"/>
</dbReference>
<dbReference type="GO" id="GO:0005776">
    <property type="term" value="C:autophagosome"/>
    <property type="evidence" value="ECO:0007669"/>
    <property type="project" value="UniProtKB-SubCell"/>
</dbReference>
<dbReference type="GO" id="GO:0005814">
    <property type="term" value="C:centriole"/>
    <property type="evidence" value="ECO:0007669"/>
    <property type="project" value="UniProtKB-SubCell"/>
</dbReference>
<dbReference type="GO" id="GO:0005829">
    <property type="term" value="C:cytosol"/>
    <property type="evidence" value="ECO:0007669"/>
    <property type="project" value="GOC"/>
</dbReference>
<dbReference type="GO" id="GO:0005769">
    <property type="term" value="C:early endosome"/>
    <property type="evidence" value="ECO:0000250"/>
    <property type="project" value="UniProtKB"/>
</dbReference>
<dbReference type="GO" id="GO:0031901">
    <property type="term" value="C:early endosome membrane"/>
    <property type="evidence" value="ECO:0007669"/>
    <property type="project" value="UniProtKB-SubCell"/>
</dbReference>
<dbReference type="GO" id="GO:0005770">
    <property type="term" value="C:late endosome"/>
    <property type="evidence" value="ECO:0007669"/>
    <property type="project" value="UniProtKB-SubCell"/>
</dbReference>
<dbReference type="GO" id="GO:0055037">
    <property type="term" value="C:recycling endosome"/>
    <property type="evidence" value="ECO:0000250"/>
    <property type="project" value="UniProtKB"/>
</dbReference>
<dbReference type="GO" id="GO:0055038">
    <property type="term" value="C:recycling endosome membrane"/>
    <property type="evidence" value="ECO:0007669"/>
    <property type="project" value="UniProtKB-SubCell"/>
</dbReference>
<dbReference type="GO" id="GO:0071203">
    <property type="term" value="C:WASH complex"/>
    <property type="evidence" value="ECO:0000314"/>
    <property type="project" value="UniProtKB"/>
</dbReference>
<dbReference type="GO" id="GO:0003779">
    <property type="term" value="F:actin binding"/>
    <property type="evidence" value="ECO:0007669"/>
    <property type="project" value="UniProtKB-KW"/>
</dbReference>
<dbReference type="GO" id="GO:0043014">
    <property type="term" value="F:alpha-tubulin binding"/>
    <property type="evidence" value="ECO:0000250"/>
    <property type="project" value="UniProtKB"/>
</dbReference>
<dbReference type="GO" id="GO:0043015">
    <property type="term" value="F:gamma-tubulin binding"/>
    <property type="evidence" value="ECO:0000318"/>
    <property type="project" value="GO_Central"/>
</dbReference>
<dbReference type="GO" id="GO:0034314">
    <property type="term" value="P:Arp2/3 complex-mediated actin nucleation"/>
    <property type="evidence" value="ECO:0000250"/>
    <property type="project" value="UniProtKB"/>
</dbReference>
<dbReference type="GO" id="GO:0032456">
    <property type="term" value="P:endocytic recycling"/>
    <property type="evidence" value="ECO:0000318"/>
    <property type="project" value="GO_Central"/>
</dbReference>
<dbReference type="GO" id="GO:0016197">
    <property type="term" value="P:endosomal transport"/>
    <property type="evidence" value="ECO:0000250"/>
    <property type="project" value="UniProtKB"/>
</dbReference>
<dbReference type="GO" id="GO:0006887">
    <property type="term" value="P:exocytosis"/>
    <property type="evidence" value="ECO:0000318"/>
    <property type="project" value="GO_Central"/>
</dbReference>
<dbReference type="GO" id="GO:0015031">
    <property type="term" value="P:protein transport"/>
    <property type="evidence" value="ECO:0007669"/>
    <property type="project" value="UniProtKB-KW"/>
</dbReference>
<dbReference type="GO" id="GO:0042147">
    <property type="term" value="P:retrograde transport, endosome to Golgi"/>
    <property type="evidence" value="ECO:0000250"/>
    <property type="project" value="UniProtKB"/>
</dbReference>
<dbReference type="InterPro" id="IPR028290">
    <property type="entry name" value="WASH1"/>
</dbReference>
<dbReference type="InterPro" id="IPR021854">
    <property type="entry name" value="WASH1_WAHD"/>
</dbReference>
<dbReference type="InterPro" id="IPR003124">
    <property type="entry name" value="WH2_dom"/>
</dbReference>
<dbReference type="PANTHER" id="PTHR23331">
    <property type="entry name" value="CXYORF1"/>
    <property type="match status" value="1"/>
</dbReference>
<dbReference type="PANTHER" id="PTHR23331:SF5">
    <property type="entry name" value="WAS PROTEIN FAMILY HOMOLOG 2-RELATED"/>
    <property type="match status" value="1"/>
</dbReference>
<dbReference type="Pfam" id="PF11945">
    <property type="entry name" value="WASH_WAHD"/>
    <property type="match status" value="1"/>
</dbReference>
<dbReference type="PROSITE" id="PS51082">
    <property type="entry name" value="WH2"/>
    <property type="match status" value="1"/>
</dbReference>
<feature type="chain" id="PRO_0000390961" description="WASH complex subunit 1">
    <location>
        <begin position="1"/>
        <end position="471"/>
    </location>
</feature>
<feature type="domain" description="WH2" evidence="4">
    <location>
        <begin position="365"/>
        <end position="387"/>
    </location>
</feature>
<feature type="region of interest" description="WHD1">
    <location>
        <begin position="1"/>
        <end position="167"/>
    </location>
</feature>
<feature type="region of interest" description="Required for WASH complex assembly" evidence="2">
    <location>
        <begin position="1"/>
        <end position="54"/>
    </location>
</feature>
<feature type="region of interest" description="Disordered" evidence="5">
    <location>
        <begin position="297"/>
        <end position="471"/>
    </location>
</feature>
<feature type="region of interest" description="VCA" evidence="2">
    <location>
        <begin position="353"/>
        <end position="471"/>
    </location>
</feature>
<feature type="compositionally biased region" description="Pro residues" evidence="5">
    <location>
        <begin position="304"/>
        <end position="336"/>
    </location>
</feature>
<feature type="compositionally biased region" description="Basic and acidic residues" evidence="5">
    <location>
        <begin position="386"/>
        <end position="402"/>
    </location>
</feature>
<feature type="compositionally biased region" description="Gly residues" evidence="5">
    <location>
        <begin position="428"/>
        <end position="442"/>
    </location>
</feature>
<feature type="compositionally biased region" description="Acidic residues" evidence="5">
    <location>
        <begin position="462"/>
        <end position="471"/>
    </location>
</feature>
<organism>
    <name type="scientific">Bos taurus</name>
    <name type="common">Bovine</name>
    <dbReference type="NCBI Taxonomy" id="9913"/>
    <lineage>
        <taxon>Eukaryota</taxon>
        <taxon>Metazoa</taxon>
        <taxon>Chordata</taxon>
        <taxon>Craniata</taxon>
        <taxon>Vertebrata</taxon>
        <taxon>Euteleostomi</taxon>
        <taxon>Mammalia</taxon>
        <taxon>Eutheria</taxon>
        <taxon>Laurasiatheria</taxon>
        <taxon>Artiodactyla</taxon>
        <taxon>Ruminantia</taxon>
        <taxon>Pecora</taxon>
        <taxon>Bovidae</taxon>
        <taxon>Bovinae</taxon>
        <taxon>Bos</taxon>
    </lineage>
</organism>
<comment type="function">
    <text evidence="1 2 3">Acts as a component of the WASH core complex that functions as a nucleation-promoting factor (NPF) at the surface of endosomes, where it recruits and activates the Arp2/3 complex to induce actin polymerization, playing a key role in the fission of tubules that serve as transport intermediates during endosome sorting. Involved in endocytic trafficking of EGF. Involved in transferrin receptor recycling. Regulates the trafficking of endosomal alpha5beta1 integrin to the plasma membrane and involved in invasive cell migration. In T-cells involved in endosome-to-membrane recycling of receptors including T-cell receptor (TCR), CD28 and ITGAL; proposed to be implicated in T-cell proliferation and effector function. In dendritic cells involved in endosome-to-membrane recycling of major histocompatibility complex (MHC) class II probably involving retromer and subsequently allowing antigen sampling, loading and presentation during T-cell activation. Involved in negative regulation of autophagy independently from its role in endosomal sorting by inhibiting BECN1 ubiquitination to inactivate PIK3C3/Vps34 activity (By similarity).</text>
</comment>
<comment type="subunit">
    <text evidence="1 2 3">Component of the WASH core complex also described as WASH regulatory complex SHRC composed of WASHC1, WASHC2, WASHC3, WASHC4 and WASHC5. The WASH core complex associates with the F-actin-capping protein dimer (formed by CAPZA1, CAPZA2 or CAPZA3 and CAPZB); the assembly has been initially described as WASH complex (PubMed:20498093). Interacts (via WHD1 region) with WASHC2; the interaction is direct. Interacts with alpha-tubulin. Interacts with BECN1; WASHC1 and AMBRA1 can competitively interact with BECN1. Interacts with BLOC1S2; may associate with the BLOC-1 complex. Interacts with tubulin gamma chain (TUBG1 or TUBG2) (By similarity). Interacts with TBC1D23 (By similarity).</text>
</comment>
<comment type="subcellular location">
    <subcellularLocation>
        <location evidence="1">Early endosome membrane</location>
    </subcellularLocation>
    <subcellularLocation>
        <location evidence="3">Recycling endosome membrane</location>
    </subcellularLocation>
    <subcellularLocation>
        <location evidence="1">Late endosome</location>
    </subcellularLocation>
    <subcellularLocation>
        <location evidence="3">Cytoplasmic vesicle</location>
        <location evidence="3">Autophagosome</location>
    </subcellularLocation>
    <subcellularLocation>
        <location evidence="3">Cytoplasm</location>
        <location evidence="3">Cytoskeleton</location>
        <location evidence="3">Microtubule organizing center</location>
        <location evidence="3">Centrosome</location>
        <location evidence="3">Centriole</location>
    </subcellularLocation>
    <text evidence="1">Localization to the endosome membrane is mediated via its interaction with WASHC2.</text>
</comment>
<comment type="domain">
    <text evidence="2">The VCA (verprolin, cofilin, acidic) domain promotes actin polymerization by the Arp2/3 complex in vitro.</text>
</comment>
<comment type="similarity">
    <text evidence="6">Belongs to the WASH1 family.</text>
</comment>
<name>WASH1_BOVIN</name>